<organism>
    <name type="scientific">Eremothecium gossypii (strain ATCC 10895 / CBS 109.51 / FGSC 9923 / NRRL Y-1056)</name>
    <name type="common">Yeast</name>
    <name type="synonym">Ashbya gossypii</name>
    <dbReference type="NCBI Taxonomy" id="284811"/>
    <lineage>
        <taxon>Eukaryota</taxon>
        <taxon>Fungi</taxon>
        <taxon>Dikarya</taxon>
        <taxon>Ascomycota</taxon>
        <taxon>Saccharomycotina</taxon>
        <taxon>Saccharomycetes</taxon>
        <taxon>Saccharomycetales</taxon>
        <taxon>Saccharomycetaceae</taxon>
        <taxon>Eremothecium</taxon>
    </lineage>
</organism>
<protein>
    <recommendedName>
        <fullName>Structure-specific endonuclease subunit SLX4</fullName>
    </recommendedName>
</protein>
<proteinExistence type="inferred from homology"/>
<comment type="function">
    <text evidence="1">Regulatory subunit of the SLX1-SLX4 structure-specific endonuclease that resolves DNA secondary structures generated during DNA repair and recombination. Has endonuclease activity towards branched DNA substrates, introducing single-strand cuts in duplex DNA close to junctions with ss-DNA (By similarity).</text>
</comment>
<comment type="subunit">
    <text evidence="1">Forms a heterodimer with SLX1.</text>
</comment>
<comment type="subcellular location">
    <subcellularLocation>
        <location evidence="1">Nucleus</location>
    </subcellularLocation>
</comment>
<comment type="PTM">
    <text evidence="1">Phosphorylated in response to DNA damage.</text>
</comment>
<comment type="similarity">
    <text evidence="3">Belongs to the SLX4 family.</text>
</comment>
<reference key="1">
    <citation type="journal article" date="2004" name="Science">
        <title>The Ashbya gossypii genome as a tool for mapping the ancient Saccharomyces cerevisiae genome.</title>
        <authorList>
            <person name="Dietrich F.S."/>
            <person name="Voegeli S."/>
            <person name="Brachat S."/>
            <person name="Lerch A."/>
            <person name="Gates K."/>
            <person name="Steiner S."/>
            <person name="Mohr C."/>
            <person name="Poehlmann R."/>
            <person name="Luedi P."/>
            <person name="Choi S."/>
            <person name="Wing R.A."/>
            <person name="Flavier A."/>
            <person name="Gaffney T.D."/>
            <person name="Philippsen P."/>
        </authorList>
    </citation>
    <scope>NUCLEOTIDE SEQUENCE [LARGE SCALE GENOMIC DNA]</scope>
    <source>
        <strain>ATCC 10895 / CBS 109.51 / FGSC 9923 / NRRL Y-1056</strain>
    </source>
</reference>
<reference key="2">
    <citation type="journal article" date="2013" name="G3 (Bethesda)">
        <title>Genomes of Ashbya fungi isolated from insects reveal four mating-type loci, numerous translocations, lack of transposons, and distinct gene duplications.</title>
        <authorList>
            <person name="Dietrich F.S."/>
            <person name="Voegeli S."/>
            <person name="Kuo S."/>
            <person name="Philippsen P."/>
        </authorList>
    </citation>
    <scope>GENOME REANNOTATION</scope>
    <source>
        <strain>ATCC 10895 / CBS 109.51 / FGSC 9923 / NRRL Y-1056</strain>
    </source>
</reference>
<sequence length="498" mass="54691">MDLRRAERNLKILGDANSDEDMPVAHSVEETQGQALFSESDEADAEEDAAESPQSGVGGRTTTAESGGEEHREQVFLSTQVQGRIDEFEATEGARRQFRQLVTGFTYAQEDGEANAGGRTAKRVPKVRRTRRNNTKVRSLTEFNTENFERLRKEDRARSLLTMLSGKTQKVNNLLRGLQQERSRERAFHGCSVYNEGEWREIVRLLHERLPKATRSDVACIKSYVYGDGLDETPWCASHARPPDCPAQSQERQGTCGPGDDELRIFTLSQLLEDQSASEDVIPDSMDAGDAVSLGSPQPQAGLSQHSFCPDSTATSPLRPPATPLTRAPASPLPVRVYTAPASPLDYIPDSEDDPYVLQGPSQARSPPSLLEVRRTLKNIGVRPGRSAAAVRKAAAAVARIEAASDAASLGTASDADRRSALFLRMTALVRRSPRLLAHIYCLRPVALDDLRAVLEADDDFIALLDDSLIRQWADFTGICVKNDTSDSQRPPQPLESQ</sequence>
<name>SLX4_EREGS</name>
<dbReference type="EMBL" id="AE016820">
    <property type="protein sequence ID" value="AAS54531.1"/>
    <property type="molecule type" value="Genomic_DNA"/>
</dbReference>
<dbReference type="RefSeq" id="NP_986707.1">
    <property type="nucleotide sequence ID" value="NM_211769.1"/>
</dbReference>
<dbReference type="SMR" id="Q750B5"/>
<dbReference type="FunCoup" id="Q750B5">
    <property type="interactions" value="45"/>
</dbReference>
<dbReference type="STRING" id="284811.Q750B5"/>
<dbReference type="EnsemblFungi" id="AAS54531">
    <property type="protein sequence ID" value="AAS54531"/>
    <property type="gene ID" value="AGOS_AGR042W"/>
</dbReference>
<dbReference type="GeneID" id="4623007"/>
<dbReference type="KEGG" id="ago:AGOS_AGR042W"/>
<dbReference type="eggNOG" id="ENOG502RYEW">
    <property type="taxonomic scope" value="Eukaryota"/>
</dbReference>
<dbReference type="HOGENOM" id="CLU_022388_0_0_1"/>
<dbReference type="InParanoid" id="Q750B5"/>
<dbReference type="OrthoDB" id="4066789at2759"/>
<dbReference type="Proteomes" id="UP000000591">
    <property type="component" value="Chromosome VII"/>
</dbReference>
<dbReference type="GO" id="GO:0033557">
    <property type="term" value="C:Slx1-Slx4 complex"/>
    <property type="evidence" value="ECO:0007669"/>
    <property type="project" value="InterPro"/>
</dbReference>
<dbReference type="GO" id="GO:0006310">
    <property type="term" value="P:DNA recombination"/>
    <property type="evidence" value="ECO:0007669"/>
    <property type="project" value="UniProtKB-KW"/>
</dbReference>
<dbReference type="GO" id="GO:0006281">
    <property type="term" value="P:DNA repair"/>
    <property type="evidence" value="ECO:0007669"/>
    <property type="project" value="UniProtKB-KW"/>
</dbReference>
<dbReference type="GO" id="GO:0006260">
    <property type="term" value="P:DNA replication"/>
    <property type="evidence" value="ECO:0007669"/>
    <property type="project" value="InterPro"/>
</dbReference>
<dbReference type="InterPro" id="IPR018574">
    <property type="entry name" value="Structure-sp_endonuc_su_Slx4"/>
</dbReference>
<dbReference type="Pfam" id="PF09494">
    <property type="entry name" value="Slx4"/>
    <property type="match status" value="1"/>
</dbReference>
<gene>
    <name type="primary">SLX4</name>
    <name type="ordered locus">AGR042W</name>
</gene>
<feature type="chain" id="PRO_0000388011" description="Structure-specific endonuclease subunit SLX4">
    <location>
        <begin position="1"/>
        <end position="498"/>
    </location>
</feature>
<feature type="region of interest" description="Disordered" evidence="2">
    <location>
        <begin position="1"/>
        <end position="75"/>
    </location>
</feature>
<feature type="region of interest" description="Disordered" evidence="2">
    <location>
        <begin position="239"/>
        <end position="260"/>
    </location>
</feature>
<feature type="region of interest" description="Disordered" evidence="2">
    <location>
        <begin position="281"/>
        <end position="330"/>
    </location>
</feature>
<feature type="compositionally biased region" description="Basic and acidic residues" evidence="2">
    <location>
        <begin position="1"/>
        <end position="10"/>
    </location>
</feature>
<feature type="compositionally biased region" description="Acidic residues" evidence="2">
    <location>
        <begin position="39"/>
        <end position="50"/>
    </location>
</feature>
<feature type="compositionally biased region" description="Polar residues" evidence="2">
    <location>
        <begin position="295"/>
        <end position="307"/>
    </location>
</feature>
<evidence type="ECO:0000250" key="1"/>
<evidence type="ECO:0000256" key="2">
    <source>
        <dbReference type="SAM" id="MobiDB-lite"/>
    </source>
</evidence>
<evidence type="ECO:0000305" key="3"/>
<accession>Q750B5</accession>
<keyword id="KW-0227">DNA damage</keyword>
<keyword id="KW-0233">DNA recombination</keyword>
<keyword id="KW-0234">DNA repair</keyword>
<keyword id="KW-0539">Nucleus</keyword>
<keyword id="KW-0597">Phosphoprotein</keyword>
<keyword id="KW-1185">Reference proteome</keyword>